<evidence type="ECO:0000250" key="1"/>
<evidence type="ECO:0000255" key="2"/>
<evidence type="ECO:0000269" key="3">
    <source>
    </source>
</evidence>
<evidence type="ECO:0000269" key="4">
    <source>
    </source>
</evidence>
<evidence type="ECO:0000269" key="5">
    <source>
    </source>
</evidence>
<evidence type="ECO:0000305" key="6"/>
<reference key="1">
    <citation type="journal article" date="2000" name="Science">
        <title>The genome sequence of Drosophila melanogaster.</title>
        <authorList>
            <person name="Adams M.D."/>
            <person name="Celniker S.E."/>
            <person name="Holt R.A."/>
            <person name="Evans C.A."/>
            <person name="Gocayne J.D."/>
            <person name="Amanatides P.G."/>
            <person name="Scherer S.E."/>
            <person name="Li P.W."/>
            <person name="Hoskins R.A."/>
            <person name="Galle R.F."/>
            <person name="George R.A."/>
            <person name="Lewis S.E."/>
            <person name="Richards S."/>
            <person name="Ashburner M."/>
            <person name="Henderson S.N."/>
            <person name="Sutton G.G."/>
            <person name="Wortman J.R."/>
            <person name="Yandell M.D."/>
            <person name="Zhang Q."/>
            <person name="Chen L.X."/>
            <person name="Brandon R.C."/>
            <person name="Rogers Y.-H.C."/>
            <person name="Blazej R.G."/>
            <person name="Champe M."/>
            <person name="Pfeiffer B.D."/>
            <person name="Wan K.H."/>
            <person name="Doyle C."/>
            <person name="Baxter E.G."/>
            <person name="Helt G."/>
            <person name="Nelson C.R."/>
            <person name="Miklos G.L.G."/>
            <person name="Abril J.F."/>
            <person name="Agbayani A."/>
            <person name="An H.-J."/>
            <person name="Andrews-Pfannkoch C."/>
            <person name="Baldwin D."/>
            <person name="Ballew R.M."/>
            <person name="Basu A."/>
            <person name="Baxendale J."/>
            <person name="Bayraktaroglu L."/>
            <person name="Beasley E.M."/>
            <person name="Beeson K.Y."/>
            <person name="Benos P.V."/>
            <person name="Berman B.P."/>
            <person name="Bhandari D."/>
            <person name="Bolshakov S."/>
            <person name="Borkova D."/>
            <person name="Botchan M.R."/>
            <person name="Bouck J."/>
            <person name="Brokstein P."/>
            <person name="Brottier P."/>
            <person name="Burtis K.C."/>
            <person name="Busam D.A."/>
            <person name="Butler H."/>
            <person name="Cadieu E."/>
            <person name="Center A."/>
            <person name="Chandra I."/>
            <person name="Cherry J.M."/>
            <person name="Cawley S."/>
            <person name="Dahlke C."/>
            <person name="Davenport L.B."/>
            <person name="Davies P."/>
            <person name="de Pablos B."/>
            <person name="Delcher A."/>
            <person name="Deng Z."/>
            <person name="Mays A.D."/>
            <person name="Dew I."/>
            <person name="Dietz S.M."/>
            <person name="Dodson K."/>
            <person name="Doup L.E."/>
            <person name="Downes M."/>
            <person name="Dugan-Rocha S."/>
            <person name="Dunkov B.C."/>
            <person name="Dunn P."/>
            <person name="Durbin K.J."/>
            <person name="Evangelista C.C."/>
            <person name="Ferraz C."/>
            <person name="Ferriera S."/>
            <person name="Fleischmann W."/>
            <person name="Fosler C."/>
            <person name="Gabrielian A.E."/>
            <person name="Garg N.S."/>
            <person name="Gelbart W.M."/>
            <person name="Glasser K."/>
            <person name="Glodek A."/>
            <person name="Gong F."/>
            <person name="Gorrell J.H."/>
            <person name="Gu Z."/>
            <person name="Guan P."/>
            <person name="Harris M."/>
            <person name="Harris N.L."/>
            <person name="Harvey D.A."/>
            <person name="Heiman T.J."/>
            <person name="Hernandez J.R."/>
            <person name="Houck J."/>
            <person name="Hostin D."/>
            <person name="Houston K.A."/>
            <person name="Howland T.J."/>
            <person name="Wei M.-H."/>
            <person name="Ibegwam C."/>
            <person name="Jalali M."/>
            <person name="Kalush F."/>
            <person name="Karpen G.H."/>
            <person name="Ke Z."/>
            <person name="Kennison J.A."/>
            <person name="Ketchum K.A."/>
            <person name="Kimmel B.E."/>
            <person name="Kodira C.D."/>
            <person name="Kraft C.L."/>
            <person name="Kravitz S."/>
            <person name="Kulp D."/>
            <person name="Lai Z."/>
            <person name="Lasko P."/>
            <person name="Lei Y."/>
            <person name="Levitsky A.A."/>
            <person name="Li J.H."/>
            <person name="Li Z."/>
            <person name="Liang Y."/>
            <person name="Lin X."/>
            <person name="Liu X."/>
            <person name="Mattei B."/>
            <person name="McIntosh T.C."/>
            <person name="McLeod M.P."/>
            <person name="McPherson D."/>
            <person name="Merkulov G."/>
            <person name="Milshina N.V."/>
            <person name="Mobarry C."/>
            <person name="Morris J."/>
            <person name="Moshrefi A."/>
            <person name="Mount S.M."/>
            <person name="Moy M."/>
            <person name="Murphy B."/>
            <person name="Murphy L."/>
            <person name="Muzny D.M."/>
            <person name="Nelson D.L."/>
            <person name="Nelson D.R."/>
            <person name="Nelson K.A."/>
            <person name="Nixon K."/>
            <person name="Nusskern D.R."/>
            <person name="Pacleb J.M."/>
            <person name="Palazzolo M."/>
            <person name="Pittman G.S."/>
            <person name="Pan S."/>
            <person name="Pollard J."/>
            <person name="Puri V."/>
            <person name="Reese M.G."/>
            <person name="Reinert K."/>
            <person name="Remington K."/>
            <person name="Saunders R.D.C."/>
            <person name="Scheeler F."/>
            <person name="Shen H."/>
            <person name="Shue B.C."/>
            <person name="Siden-Kiamos I."/>
            <person name="Simpson M."/>
            <person name="Skupski M.P."/>
            <person name="Smith T.J."/>
            <person name="Spier E."/>
            <person name="Spradling A.C."/>
            <person name="Stapleton M."/>
            <person name="Strong R."/>
            <person name="Sun E."/>
            <person name="Svirskas R."/>
            <person name="Tector C."/>
            <person name="Turner R."/>
            <person name="Venter E."/>
            <person name="Wang A.H."/>
            <person name="Wang X."/>
            <person name="Wang Z.-Y."/>
            <person name="Wassarman D.A."/>
            <person name="Weinstock G.M."/>
            <person name="Weissenbach J."/>
            <person name="Williams S.M."/>
            <person name="Woodage T."/>
            <person name="Worley K.C."/>
            <person name="Wu D."/>
            <person name="Yang S."/>
            <person name="Yao Q.A."/>
            <person name="Ye J."/>
            <person name="Yeh R.-F."/>
            <person name="Zaveri J.S."/>
            <person name="Zhan M."/>
            <person name="Zhang G."/>
            <person name="Zhao Q."/>
            <person name="Zheng L."/>
            <person name="Zheng X.H."/>
            <person name="Zhong F.N."/>
            <person name="Zhong W."/>
            <person name="Zhou X."/>
            <person name="Zhu S.C."/>
            <person name="Zhu X."/>
            <person name="Smith H.O."/>
            <person name="Gibbs R.A."/>
            <person name="Myers E.W."/>
            <person name="Rubin G.M."/>
            <person name="Venter J.C."/>
        </authorList>
    </citation>
    <scope>NUCLEOTIDE SEQUENCE [LARGE SCALE GENOMIC DNA]</scope>
    <source>
        <strain>Berkeley</strain>
    </source>
</reference>
<reference key="2">
    <citation type="journal article" date="2002" name="Genome Biol.">
        <title>Annotation of the Drosophila melanogaster euchromatic genome: a systematic review.</title>
        <authorList>
            <person name="Misra S."/>
            <person name="Crosby M.A."/>
            <person name="Mungall C.J."/>
            <person name="Matthews B.B."/>
            <person name="Campbell K.S."/>
            <person name="Hradecky P."/>
            <person name="Huang Y."/>
            <person name="Kaminker J.S."/>
            <person name="Millburn G.H."/>
            <person name="Prochnik S.E."/>
            <person name="Smith C.D."/>
            <person name="Tupy J.L."/>
            <person name="Whitfield E.J."/>
            <person name="Bayraktaroglu L."/>
            <person name="Berman B.P."/>
            <person name="Bettencourt B.R."/>
            <person name="Celniker S.E."/>
            <person name="de Grey A.D.N.J."/>
            <person name="Drysdale R.A."/>
            <person name="Harris N.L."/>
            <person name="Richter J."/>
            <person name="Russo S."/>
            <person name="Schroeder A.J."/>
            <person name="Shu S.Q."/>
            <person name="Stapleton M."/>
            <person name="Yamada C."/>
            <person name="Ashburner M."/>
            <person name="Gelbart W.M."/>
            <person name="Rubin G.M."/>
            <person name="Lewis S.E."/>
        </authorList>
    </citation>
    <scope>GENOME REANNOTATION</scope>
    <source>
        <strain>Berkeley</strain>
    </source>
</reference>
<reference key="3">
    <citation type="journal article" date="2000" name="Cell">
        <title>An olfactory sensory map in the fly brain.</title>
        <authorList>
            <person name="Vosshall L.B."/>
            <person name="Wong A.M."/>
            <person name="Axel R."/>
        </authorList>
    </citation>
    <scope>TISSUE SPECIFICITY</scope>
</reference>
<reference key="4">
    <citation type="journal article" date="2006" name="Cell">
        <title>Coding of odors by a receptor repertoire.</title>
        <authorList>
            <person name="Hallem E.A."/>
            <person name="Carlson J.R."/>
        </authorList>
    </citation>
    <scope>FUNCTION</scope>
</reference>
<reference key="5">
    <citation type="journal article" date="2013" name="Curr. Biol.">
        <title>Olfactory preference for egg laying on citrus substrates in Drosophila.</title>
        <authorList>
            <person name="Dweck H.K."/>
            <person name="Ebrahim S.A."/>
            <person name="Kromann S."/>
            <person name="Bown D."/>
            <person name="Hillbur Y."/>
            <person name="Sachse S."/>
            <person name="Hansson B.S."/>
            <person name="Stensmyr M.C."/>
        </authorList>
    </citation>
    <scope>FUNCTION</scope>
    <scope>TISSUE SPECIFICITY</scope>
</reference>
<protein>
    <recommendedName>
        <fullName>Odorant receptor 19a</fullName>
    </recommendedName>
</protein>
<gene>
    <name type="primary">Or19a</name>
    <name type="ORF">CG18859</name>
</gene>
<name>OR19A_DROME</name>
<organism>
    <name type="scientific">Drosophila melanogaster</name>
    <name type="common">Fruit fly</name>
    <dbReference type="NCBI Taxonomy" id="7227"/>
    <lineage>
        <taxon>Eukaryota</taxon>
        <taxon>Metazoa</taxon>
        <taxon>Ecdysozoa</taxon>
        <taxon>Arthropoda</taxon>
        <taxon>Hexapoda</taxon>
        <taxon>Insecta</taxon>
        <taxon>Pterygota</taxon>
        <taxon>Neoptera</taxon>
        <taxon>Endopterygota</taxon>
        <taxon>Diptera</taxon>
        <taxon>Brachycera</taxon>
        <taxon>Muscomorpha</taxon>
        <taxon>Ephydroidea</taxon>
        <taxon>Drosophilidae</taxon>
        <taxon>Drosophila</taxon>
        <taxon>Sophophora</taxon>
    </lineage>
</organism>
<comment type="function">
    <text evidence="4 5">Odorant receptor which mediates acceptance or avoidance behavior, depending on its substrates. The odorant receptor repertoire encodes a large collection of odor stimuli that vary widely in identity, intensity, and duration. May form a complex with Orco to form odorant-sensing units, providing sensitive and prolonged odorant signaling and calcium permeability. Involved in the preference for citrus fruits for oviposition, especially through the response to valencene, the primary ligand of Or19a. Larvae growing on citrus fruits suffer a reduced risk of parasitism since endoparasitoid wasps that parasitize larvae are strongly repelled by the smell of citrus, as well as by valencene.</text>
</comment>
<comment type="subunit">
    <text evidence="1">Interacts with Orco. Complexes exist early in the endomembrane system in olfactory sensory neurons (OSNs), coupling these complexes to the conserved ciliary trafficking pathway (By similarity).</text>
</comment>
<comment type="subcellular location">
    <subcellularLocation>
        <location evidence="1">Cell membrane</location>
        <topology evidence="1">Multi-pass membrane protein</topology>
    </subcellularLocation>
</comment>
<comment type="tissue specificity">
    <text evidence="3 5">Expressed in ai2A olfactory sensory neurons in the antenna.</text>
</comment>
<comment type="miscellaneous">
    <text>The atypical heteromeric and topological design of the odorant receptors appears to be an insect-specific solution for odor recognition, making the OR/Orco complex an attractive target for the development of highly selective insect repellents to disrupt olfactory-mediated host-seeking behaviors of insect disease vectors. Odor-evoked OR currents are independent of known G-protein-coupled second messenger pathways.</text>
</comment>
<comment type="similarity">
    <text evidence="6">Belongs to the insect chemoreceptor superfamily. Heteromeric odorant receptor channel (TC 1.A.69) family. Or2a subfamily.</text>
</comment>
<feature type="chain" id="PRO_0000174230" description="Odorant receptor 19a">
    <location>
        <begin position="1"/>
        <end position="387"/>
    </location>
</feature>
<feature type="topological domain" description="Cytoplasmic" evidence="2">
    <location>
        <begin position="1"/>
        <end position="40"/>
    </location>
</feature>
<feature type="transmembrane region" description="Helical; Name=1" evidence="2">
    <location>
        <begin position="41"/>
        <end position="61"/>
    </location>
</feature>
<feature type="topological domain" description="Extracellular" evidence="2">
    <location>
        <begin position="62"/>
        <end position="71"/>
    </location>
</feature>
<feature type="transmembrane region" description="Helical; Name=2" evidence="2">
    <location>
        <begin position="72"/>
        <end position="92"/>
    </location>
</feature>
<feature type="topological domain" description="Cytoplasmic" evidence="2">
    <location>
        <begin position="93"/>
        <end position="127"/>
    </location>
</feature>
<feature type="transmembrane region" description="Helical; Name=3" evidence="2">
    <location>
        <begin position="128"/>
        <end position="148"/>
    </location>
</feature>
<feature type="topological domain" description="Extracellular" evidence="2">
    <location>
        <begin position="149"/>
        <end position="171"/>
    </location>
</feature>
<feature type="transmembrane region" description="Helical; Name=4" evidence="2">
    <location>
        <begin position="172"/>
        <end position="192"/>
    </location>
</feature>
<feature type="topological domain" description="Cytoplasmic" evidence="2">
    <location>
        <begin position="193"/>
        <end position="254"/>
    </location>
</feature>
<feature type="transmembrane region" description="Helical; Name=5" evidence="2">
    <location>
        <begin position="255"/>
        <end position="275"/>
    </location>
</feature>
<feature type="topological domain" description="Extracellular" evidence="2">
    <location>
        <begin position="276"/>
        <end position="285"/>
    </location>
</feature>
<feature type="transmembrane region" description="Helical; Name=6" evidence="2">
    <location>
        <begin position="286"/>
        <end position="306"/>
    </location>
</feature>
<feature type="topological domain" description="Cytoplasmic" evidence="2">
    <location>
        <begin position="307"/>
        <end position="336"/>
    </location>
</feature>
<feature type="transmembrane region" description="Helical; Name=7" evidence="2">
    <location>
        <begin position="337"/>
        <end position="357"/>
    </location>
</feature>
<feature type="topological domain" description="Extracellular" evidence="2">
    <location>
        <begin position="358"/>
        <end position="387"/>
    </location>
</feature>
<dbReference type="EMBL" id="AE014298">
    <property type="protein sequence ID" value="AAG22450.2"/>
    <property type="molecule type" value="Genomic_DNA"/>
</dbReference>
<dbReference type="RefSeq" id="NP_525013.2">
    <property type="nucleotide sequence ID" value="NM_080274.3"/>
</dbReference>
<dbReference type="SMR" id="Q9I816"/>
<dbReference type="FunCoup" id="Q9I816">
    <property type="interactions" value="39"/>
</dbReference>
<dbReference type="IntAct" id="Q9I816">
    <property type="interactions" value="1"/>
</dbReference>
<dbReference type="STRING" id="7227.FBpp0070028"/>
<dbReference type="PaxDb" id="7227-FBpp0070028"/>
<dbReference type="EnsemblMetazoa" id="FBtr0070029">
    <property type="protein sequence ID" value="FBpp0070028"/>
    <property type="gene ID" value="FBgn0041626"/>
</dbReference>
<dbReference type="GeneID" id="59214"/>
<dbReference type="KEGG" id="dme:Dmel_CG18859"/>
<dbReference type="AGR" id="FB:FBgn0041626"/>
<dbReference type="CTD" id="59214"/>
<dbReference type="FlyBase" id="FBgn0041626">
    <property type="gene designation" value="Or19a"/>
</dbReference>
<dbReference type="VEuPathDB" id="VectorBase:FBgn0041626"/>
<dbReference type="eggNOG" id="ENOG502T6TE">
    <property type="taxonomic scope" value="Eukaryota"/>
</dbReference>
<dbReference type="GeneTree" id="ENSGT00540000073151"/>
<dbReference type="HOGENOM" id="CLU_033399_8_1_1"/>
<dbReference type="InParanoid" id="Q9I816"/>
<dbReference type="OMA" id="YESHLIT"/>
<dbReference type="OrthoDB" id="6604226at2759"/>
<dbReference type="PhylomeDB" id="Q9I816"/>
<dbReference type="BioGRID-ORCS" id="59214">
    <property type="hits" value="0 hits in 1 CRISPR screen"/>
</dbReference>
<dbReference type="GenomeRNAi" id="59214"/>
<dbReference type="PRO" id="PR:Q9I816"/>
<dbReference type="Proteomes" id="UP000000803">
    <property type="component" value="Chromosome X"/>
</dbReference>
<dbReference type="Bgee" id="FBgn0041626">
    <property type="expression patterns" value="Expressed in adult olfactory receptor neuron Or19 (Drosophila)"/>
</dbReference>
<dbReference type="GO" id="GO:0032590">
    <property type="term" value="C:dendrite membrane"/>
    <property type="evidence" value="ECO:0000250"/>
    <property type="project" value="FlyBase"/>
</dbReference>
<dbReference type="GO" id="GO:0005886">
    <property type="term" value="C:plasma membrane"/>
    <property type="evidence" value="ECO:0007005"/>
    <property type="project" value="FlyBase"/>
</dbReference>
<dbReference type="GO" id="GO:0170020">
    <property type="term" value="F:ionotropic olfactory receptor activity"/>
    <property type="evidence" value="ECO:0007005"/>
    <property type="project" value="FlyBase"/>
</dbReference>
<dbReference type="GO" id="GO:0005549">
    <property type="term" value="F:odorant binding"/>
    <property type="evidence" value="ECO:0000250"/>
    <property type="project" value="FlyBase"/>
</dbReference>
<dbReference type="GO" id="GO:0004984">
    <property type="term" value="F:olfactory receptor activity"/>
    <property type="evidence" value="ECO:0000318"/>
    <property type="project" value="GO_Central"/>
</dbReference>
<dbReference type="GO" id="GO:0050911">
    <property type="term" value="P:detection of chemical stimulus involved in sensory perception of smell"/>
    <property type="evidence" value="ECO:0007005"/>
    <property type="project" value="FlyBase"/>
</dbReference>
<dbReference type="GO" id="GO:0007165">
    <property type="term" value="P:signal transduction"/>
    <property type="evidence" value="ECO:0007669"/>
    <property type="project" value="UniProtKB-KW"/>
</dbReference>
<dbReference type="InterPro" id="IPR004117">
    <property type="entry name" value="7tm6_olfct_rcpt"/>
</dbReference>
<dbReference type="PANTHER" id="PTHR21137">
    <property type="entry name" value="ODORANT RECEPTOR"/>
    <property type="match status" value="1"/>
</dbReference>
<dbReference type="PANTHER" id="PTHR21137:SF35">
    <property type="entry name" value="ODORANT RECEPTOR 19A-RELATED"/>
    <property type="match status" value="1"/>
</dbReference>
<dbReference type="Pfam" id="PF02949">
    <property type="entry name" value="7tm_6"/>
    <property type="match status" value="1"/>
</dbReference>
<keyword id="KW-1003">Cell membrane</keyword>
<keyword id="KW-0472">Membrane</keyword>
<keyword id="KW-0552">Olfaction</keyword>
<keyword id="KW-0675">Receptor</keyword>
<keyword id="KW-1185">Reference proteome</keyword>
<keyword id="KW-0716">Sensory transduction</keyword>
<keyword id="KW-0807">Transducer</keyword>
<keyword id="KW-0812">Transmembrane</keyword>
<keyword id="KW-1133">Transmembrane helix</keyword>
<sequence length="387" mass="44228">MDISKVDSTRALVNHWRIFRIMGIHPPGKRTFWGRHYTAYSMVWNVTFHICIWVSFSVNLLQSNSLETFCESLCVTMPHTLYMLKLINVRRMRGQMISSHWLLRLLDKRLGCDDERQIIMAGIERAEFIFRTIFRGLACTVVLGIIYISASSEPTLMYPTWIPWNWRDSTSAYLATAMLHTTALMANATLVLNLSSYPGTYLILVSVHTKALALRVSKLGYGAPLPAVRMQAILVGYIHDHQIILRLFKSLERSLSMTCFLQFFSTACAQCTICYFLLFGNVGIMRFMNMLFLLVILTTETLLLCYTAELPCKEGESLLTAVYSCNWLSQSVNFRRLLLLMLARCQIPMILVSGVIVPISMKTFTVMIKGAYTMLTLLNEIRKTSLE</sequence>
<accession>Q9I816</accession>
<proteinExistence type="evidence at transcript level"/>